<proteinExistence type="inferred from homology"/>
<organism>
    <name type="scientific">Sodalis glossinidius (strain morsitans)</name>
    <dbReference type="NCBI Taxonomy" id="343509"/>
    <lineage>
        <taxon>Bacteria</taxon>
        <taxon>Pseudomonadati</taxon>
        <taxon>Pseudomonadota</taxon>
        <taxon>Gammaproteobacteria</taxon>
        <taxon>Enterobacterales</taxon>
        <taxon>Bruguierivoracaceae</taxon>
        <taxon>Sodalis</taxon>
    </lineage>
</organism>
<accession>Q2NRN0</accession>
<feature type="chain" id="PRO_0000248767" description="Proline--tRNA ligase">
    <location>
        <begin position="1"/>
        <end position="574"/>
    </location>
</feature>
<comment type="function">
    <text evidence="1">Catalyzes the attachment of proline to tRNA(Pro) in a two-step reaction: proline is first activated by ATP to form Pro-AMP and then transferred to the acceptor end of tRNA(Pro). As ProRS can inadvertently accommodate and process non-cognate amino acids such as alanine and cysteine, to avoid such errors it has two additional distinct editing activities against alanine. One activity is designated as 'pretransfer' editing and involves the tRNA(Pro)-independent hydrolysis of activated Ala-AMP. The other activity is designated 'posttransfer' editing and involves deacylation of mischarged Ala-tRNA(Pro). The misacylated Cys-tRNA(Pro) is not edited by ProRS.</text>
</comment>
<comment type="catalytic activity">
    <reaction evidence="1">
        <text>tRNA(Pro) + L-proline + ATP = L-prolyl-tRNA(Pro) + AMP + diphosphate</text>
        <dbReference type="Rhea" id="RHEA:14305"/>
        <dbReference type="Rhea" id="RHEA-COMP:9700"/>
        <dbReference type="Rhea" id="RHEA-COMP:9702"/>
        <dbReference type="ChEBI" id="CHEBI:30616"/>
        <dbReference type="ChEBI" id="CHEBI:33019"/>
        <dbReference type="ChEBI" id="CHEBI:60039"/>
        <dbReference type="ChEBI" id="CHEBI:78442"/>
        <dbReference type="ChEBI" id="CHEBI:78532"/>
        <dbReference type="ChEBI" id="CHEBI:456215"/>
        <dbReference type="EC" id="6.1.1.15"/>
    </reaction>
</comment>
<comment type="subunit">
    <text evidence="1">Homodimer.</text>
</comment>
<comment type="subcellular location">
    <subcellularLocation>
        <location evidence="1">Cytoplasm</location>
    </subcellularLocation>
</comment>
<comment type="domain">
    <text evidence="1">Consists of three domains: the N-terminal catalytic domain, the editing domain and the C-terminal anticodon-binding domain.</text>
</comment>
<comment type="similarity">
    <text evidence="1">Belongs to the class-II aminoacyl-tRNA synthetase family. ProS type 1 subfamily.</text>
</comment>
<protein>
    <recommendedName>
        <fullName evidence="1">Proline--tRNA ligase</fullName>
        <ecNumber evidence="1">6.1.1.15</ecNumber>
    </recommendedName>
    <alternativeName>
        <fullName evidence="1">Prolyl-tRNA synthetase</fullName>
        <shortName evidence="1">ProRS</shortName>
    </alternativeName>
</protein>
<name>SYP_SODGM</name>
<sequence>MRTSQYLLSTLKEVPADAEVVSHQLMLRAGMIRKLASGLYSWLPTGLRVLRKVENIVREEMDNAGAIEVSMPVVQPADLWQESGRWVQYGPELLRFTDRGARAFVLGPTHEEVITDLIRNEVSSYKQLPLNFYQIQTKFRDEVRPRFGVMRSREFVMKDAYSFHTSQASLQATYDAMYQAYSAIFTRMGLEFRAVQADTGSIGGSASHEFQVLAGSGEDDIVFSTASDYAANIELAEAVAPAAARAAPGEDMRLVNTPDARTIAELVAQFSLPVEKTVKTLLVRAREDAGHPLVALMVRGDHHLNDVKAEKLPQVAAPLTFASEEEIRLAVGAGPGSLGPVNLPLPLVIDRSVAVMSDFAAGANAEGKHFFGINWERDLPLPQVADLRKVVEGDISPDGNGTLQIKRGIEVGHIFQLGTKYSEAMKATVQGEDGRNQTLTMGCYGIGITRVVVAAIEQNHDDRGILWPETLAPFNVAILPMNMHKSFRVKEVAEDLYQQLQARGIDVLLDDRKERPGVMFADMELIGVPHQLVIGDRNLDTEEIEYKNRRSGEKRMIKLSAIVDFLVSEIATAK</sequence>
<evidence type="ECO:0000255" key="1">
    <source>
        <dbReference type="HAMAP-Rule" id="MF_01569"/>
    </source>
</evidence>
<reference key="1">
    <citation type="journal article" date="2006" name="Genome Res.">
        <title>Massive genome erosion and functional adaptations provide insights into the symbiotic lifestyle of Sodalis glossinidius in the tsetse host.</title>
        <authorList>
            <person name="Toh H."/>
            <person name="Weiss B.L."/>
            <person name="Perkin S.A.H."/>
            <person name="Yamashita A."/>
            <person name="Oshima K."/>
            <person name="Hattori M."/>
            <person name="Aksoy S."/>
        </authorList>
    </citation>
    <scope>NUCLEOTIDE SEQUENCE [LARGE SCALE GENOMIC DNA]</scope>
    <source>
        <strain>morsitans</strain>
    </source>
</reference>
<dbReference type="EC" id="6.1.1.15" evidence="1"/>
<dbReference type="EMBL" id="AP008232">
    <property type="protein sequence ID" value="BAE75195.1"/>
    <property type="molecule type" value="Genomic_DNA"/>
</dbReference>
<dbReference type="RefSeq" id="WP_011411651.1">
    <property type="nucleotide sequence ID" value="NC_007712.1"/>
</dbReference>
<dbReference type="SMR" id="Q2NRN0"/>
<dbReference type="STRING" id="343509.SG1920"/>
<dbReference type="KEGG" id="sgl:SG1920"/>
<dbReference type="eggNOG" id="COG0442">
    <property type="taxonomic scope" value="Bacteria"/>
</dbReference>
<dbReference type="HOGENOM" id="CLU_016739_0_0_6"/>
<dbReference type="OrthoDB" id="9809052at2"/>
<dbReference type="BioCyc" id="SGLO343509:SGP1_RS17695-MONOMER"/>
<dbReference type="Proteomes" id="UP000001932">
    <property type="component" value="Chromosome"/>
</dbReference>
<dbReference type="GO" id="GO:0005829">
    <property type="term" value="C:cytosol"/>
    <property type="evidence" value="ECO:0007669"/>
    <property type="project" value="TreeGrafter"/>
</dbReference>
<dbReference type="GO" id="GO:0002161">
    <property type="term" value="F:aminoacyl-tRNA deacylase activity"/>
    <property type="evidence" value="ECO:0007669"/>
    <property type="project" value="InterPro"/>
</dbReference>
<dbReference type="GO" id="GO:0005524">
    <property type="term" value="F:ATP binding"/>
    <property type="evidence" value="ECO:0007669"/>
    <property type="project" value="UniProtKB-UniRule"/>
</dbReference>
<dbReference type="GO" id="GO:0004827">
    <property type="term" value="F:proline-tRNA ligase activity"/>
    <property type="evidence" value="ECO:0007669"/>
    <property type="project" value="UniProtKB-UniRule"/>
</dbReference>
<dbReference type="GO" id="GO:0006433">
    <property type="term" value="P:prolyl-tRNA aminoacylation"/>
    <property type="evidence" value="ECO:0007669"/>
    <property type="project" value="UniProtKB-UniRule"/>
</dbReference>
<dbReference type="CDD" id="cd04334">
    <property type="entry name" value="ProRS-INS"/>
    <property type="match status" value="1"/>
</dbReference>
<dbReference type="CDD" id="cd00861">
    <property type="entry name" value="ProRS_anticodon_short"/>
    <property type="match status" value="1"/>
</dbReference>
<dbReference type="CDD" id="cd00779">
    <property type="entry name" value="ProRS_core_prok"/>
    <property type="match status" value="1"/>
</dbReference>
<dbReference type="FunFam" id="3.30.930.10:FF:000043">
    <property type="entry name" value="Proline--tRNA ligase"/>
    <property type="match status" value="1"/>
</dbReference>
<dbReference type="FunFam" id="3.30.930.10:FF:000097">
    <property type="entry name" value="Proline--tRNA ligase"/>
    <property type="match status" value="1"/>
</dbReference>
<dbReference type="FunFam" id="3.40.50.800:FF:000006">
    <property type="entry name" value="Proline--tRNA ligase"/>
    <property type="match status" value="1"/>
</dbReference>
<dbReference type="FunFam" id="3.90.960.10:FF:000001">
    <property type="entry name" value="Proline--tRNA ligase"/>
    <property type="match status" value="1"/>
</dbReference>
<dbReference type="Gene3D" id="3.40.50.800">
    <property type="entry name" value="Anticodon-binding domain"/>
    <property type="match status" value="1"/>
</dbReference>
<dbReference type="Gene3D" id="3.30.930.10">
    <property type="entry name" value="Bira Bifunctional Protein, Domain 2"/>
    <property type="match status" value="2"/>
</dbReference>
<dbReference type="Gene3D" id="3.90.960.10">
    <property type="entry name" value="YbaK/aminoacyl-tRNA synthetase-associated domain"/>
    <property type="match status" value="1"/>
</dbReference>
<dbReference type="HAMAP" id="MF_01569">
    <property type="entry name" value="Pro_tRNA_synth_type1"/>
    <property type="match status" value="1"/>
</dbReference>
<dbReference type="InterPro" id="IPR002314">
    <property type="entry name" value="aa-tRNA-synt_IIb"/>
</dbReference>
<dbReference type="InterPro" id="IPR006195">
    <property type="entry name" value="aa-tRNA-synth_II"/>
</dbReference>
<dbReference type="InterPro" id="IPR045864">
    <property type="entry name" value="aa-tRNA-synth_II/BPL/LPL"/>
</dbReference>
<dbReference type="InterPro" id="IPR004154">
    <property type="entry name" value="Anticodon-bd"/>
</dbReference>
<dbReference type="InterPro" id="IPR036621">
    <property type="entry name" value="Anticodon-bd_dom_sf"/>
</dbReference>
<dbReference type="InterPro" id="IPR002316">
    <property type="entry name" value="Pro-tRNA-ligase_IIa"/>
</dbReference>
<dbReference type="InterPro" id="IPR004500">
    <property type="entry name" value="Pro-tRNA-synth_IIa_bac-type"/>
</dbReference>
<dbReference type="InterPro" id="IPR023717">
    <property type="entry name" value="Pro-tRNA-Synthase_IIa_type1"/>
</dbReference>
<dbReference type="InterPro" id="IPR050062">
    <property type="entry name" value="Pro-tRNA_synthetase"/>
</dbReference>
<dbReference type="InterPro" id="IPR044140">
    <property type="entry name" value="ProRS_anticodon_short"/>
</dbReference>
<dbReference type="InterPro" id="IPR033730">
    <property type="entry name" value="ProRS_core_prok"/>
</dbReference>
<dbReference type="InterPro" id="IPR036754">
    <property type="entry name" value="YbaK/aa-tRNA-synt-asso_dom_sf"/>
</dbReference>
<dbReference type="InterPro" id="IPR007214">
    <property type="entry name" value="YbaK/aa-tRNA-synth-assoc-dom"/>
</dbReference>
<dbReference type="NCBIfam" id="NF006625">
    <property type="entry name" value="PRK09194.1"/>
    <property type="match status" value="1"/>
</dbReference>
<dbReference type="NCBIfam" id="TIGR00409">
    <property type="entry name" value="proS_fam_II"/>
    <property type="match status" value="1"/>
</dbReference>
<dbReference type="PANTHER" id="PTHR42753">
    <property type="entry name" value="MITOCHONDRIAL RIBOSOME PROTEIN L39/PROLYL-TRNA LIGASE FAMILY MEMBER"/>
    <property type="match status" value="1"/>
</dbReference>
<dbReference type="PANTHER" id="PTHR42753:SF2">
    <property type="entry name" value="PROLINE--TRNA LIGASE"/>
    <property type="match status" value="1"/>
</dbReference>
<dbReference type="Pfam" id="PF03129">
    <property type="entry name" value="HGTP_anticodon"/>
    <property type="match status" value="1"/>
</dbReference>
<dbReference type="Pfam" id="PF00587">
    <property type="entry name" value="tRNA-synt_2b"/>
    <property type="match status" value="1"/>
</dbReference>
<dbReference type="Pfam" id="PF04073">
    <property type="entry name" value="tRNA_edit"/>
    <property type="match status" value="1"/>
</dbReference>
<dbReference type="PIRSF" id="PIRSF001535">
    <property type="entry name" value="ProRS_1"/>
    <property type="match status" value="1"/>
</dbReference>
<dbReference type="PRINTS" id="PR01046">
    <property type="entry name" value="TRNASYNTHPRO"/>
</dbReference>
<dbReference type="SUPFAM" id="SSF52954">
    <property type="entry name" value="Class II aaRS ABD-related"/>
    <property type="match status" value="1"/>
</dbReference>
<dbReference type="SUPFAM" id="SSF55681">
    <property type="entry name" value="Class II aaRS and biotin synthetases"/>
    <property type="match status" value="1"/>
</dbReference>
<dbReference type="SUPFAM" id="SSF55826">
    <property type="entry name" value="YbaK/ProRS associated domain"/>
    <property type="match status" value="1"/>
</dbReference>
<dbReference type="PROSITE" id="PS50862">
    <property type="entry name" value="AA_TRNA_LIGASE_II"/>
    <property type="match status" value="1"/>
</dbReference>
<keyword id="KW-0030">Aminoacyl-tRNA synthetase</keyword>
<keyword id="KW-0067">ATP-binding</keyword>
<keyword id="KW-0963">Cytoplasm</keyword>
<keyword id="KW-0436">Ligase</keyword>
<keyword id="KW-0547">Nucleotide-binding</keyword>
<keyword id="KW-0648">Protein biosynthesis</keyword>
<gene>
    <name evidence="1" type="primary">proS</name>
    <name type="ordered locus">SG1920</name>
</gene>